<proteinExistence type="inferred from homology"/>
<name>SDHL_YEAS6</name>
<organism>
    <name type="scientific">Saccharomyces cerevisiae (strain AWRI1631)</name>
    <name type="common">Baker's yeast</name>
    <dbReference type="NCBI Taxonomy" id="545124"/>
    <lineage>
        <taxon>Eukaryota</taxon>
        <taxon>Fungi</taxon>
        <taxon>Dikarya</taxon>
        <taxon>Ascomycota</taxon>
        <taxon>Saccharomycotina</taxon>
        <taxon>Saccharomycetes</taxon>
        <taxon>Saccharomycetales</taxon>
        <taxon>Saccharomycetaceae</taxon>
        <taxon>Saccharomyces</taxon>
    </lineage>
</organism>
<sequence length="338" mass="36862">MEMTHYEKTPLIRQVFNNGKTNSWFYVKHEILQPGGSFKSRGIGHLIRKNNEEALSEGSGKLAVFSSSGGNAGLAAATACRSMALNCSVVVPKTTKPRMVKKIQSAGAKVIIHGDHWGEADEYLRHELMAQESQHGSKTLYVHPFDNETIWEGHSTIVDEIIEQLKENDISLPRVKALVCSVGGGGLFSGIIKGLERNHLAEKIPVVAVETAGCDVLNKSLKKGSPVTLEKLTSVATSLGSPYIASFAFESFNKYGCKSVVLSDQDVLATCLRYADDYNFIVEPACGASLHLCYHPEILEDILEQKIYEDDIVIIIACGGSCMTYEDFVKASSTLNVS</sequence>
<reference key="1">
    <citation type="journal article" date="2008" name="FEMS Yeast Res.">
        <title>Comparative genome analysis of a Saccharomyces cerevisiae wine strain.</title>
        <authorList>
            <person name="Borneman A.R."/>
            <person name="Forgan A.H."/>
            <person name="Pretorius I.S."/>
            <person name="Chambers P.J."/>
        </authorList>
    </citation>
    <scope>NUCLEOTIDE SEQUENCE [LARGE SCALE GENOMIC DNA]</scope>
    <source>
        <strain>AWRI1631</strain>
    </source>
</reference>
<evidence type="ECO:0000250" key="1"/>
<evidence type="ECO:0000305" key="2"/>
<protein>
    <recommendedName>
        <fullName>L-serine dehydratase</fullName>
        <ecNumber>4.3.1.17</ecNumber>
    </recommendedName>
    <alternativeName>
        <fullName>L-serine deaminase</fullName>
    </alternativeName>
</protein>
<keyword id="KW-0963">Cytoplasm</keyword>
<keyword id="KW-0312">Gluconeogenesis</keyword>
<keyword id="KW-0456">Lyase</keyword>
<keyword id="KW-0663">Pyridoxal phosphate</keyword>
<feature type="chain" id="PRO_0000393396" description="L-serine dehydratase">
    <location>
        <begin position="1"/>
        <end position="338"/>
    </location>
</feature>
<feature type="modified residue" description="N6-(pyridoxal phosphate)lysine" evidence="1">
    <location>
        <position position="39"/>
    </location>
</feature>
<dbReference type="EC" id="4.3.1.17"/>
<dbReference type="EMBL" id="ABSV01001169">
    <property type="protein sequence ID" value="EDZ71597.1"/>
    <property type="molecule type" value="Genomic_DNA"/>
</dbReference>
<dbReference type="SMR" id="B5VKE8"/>
<dbReference type="TopDownProteomics" id="B5VKE8"/>
<dbReference type="OrthoDB" id="34905at4893"/>
<dbReference type="UniPathway" id="UPA00138"/>
<dbReference type="Proteomes" id="UP000008988">
    <property type="component" value="Unassembled WGS sequence"/>
</dbReference>
<dbReference type="GO" id="GO:0005737">
    <property type="term" value="C:cytoplasm"/>
    <property type="evidence" value="ECO:0007669"/>
    <property type="project" value="UniProtKB-SubCell"/>
</dbReference>
<dbReference type="GO" id="GO:0003941">
    <property type="term" value="F:L-serine ammonia-lyase activity"/>
    <property type="evidence" value="ECO:0007669"/>
    <property type="project" value="UniProtKB-EC"/>
</dbReference>
<dbReference type="GO" id="GO:0030170">
    <property type="term" value="F:pyridoxal phosphate binding"/>
    <property type="evidence" value="ECO:0007669"/>
    <property type="project" value="InterPro"/>
</dbReference>
<dbReference type="GO" id="GO:0004794">
    <property type="term" value="F:threonine deaminase activity"/>
    <property type="evidence" value="ECO:0007669"/>
    <property type="project" value="UniProtKB-ARBA"/>
</dbReference>
<dbReference type="GO" id="GO:0006094">
    <property type="term" value="P:gluconeogenesis"/>
    <property type="evidence" value="ECO:0007669"/>
    <property type="project" value="UniProtKB-UniPathway"/>
</dbReference>
<dbReference type="GO" id="GO:0009097">
    <property type="term" value="P:isoleucine biosynthetic process"/>
    <property type="evidence" value="ECO:0007669"/>
    <property type="project" value="TreeGrafter"/>
</dbReference>
<dbReference type="GO" id="GO:0006565">
    <property type="term" value="P:L-serine catabolic process"/>
    <property type="evidence" value="ECO:0007669"/>
    <property type="project" value="TreeGrafter"/>
</dbReference>
<dbReference type="GO" id="GO:0006567">
    <property type="term" value="P:threonine catabolic process"/>
    <property type="evidence" value="ECO:0007669"/>
    <property type="project" value="TreeGrafter"/>
</dbReference>
<dbReference type="CDD" id="cd06448">
    <property type="entry name" value="L-Ser-dehyd"/>
    <property type="match status" value="1"/>
</dbReference>
<dbReference type="FunFam" id="3.40.50.1100:FF:000068">
    <property type="entry name" value="Catabolic L-serine/threonine dehydratase"/>
    <property type="match status" value="1"/>
</dbReference>
<dbReference type="FunFam" id="3.40.50.1100:FF:000040">
    <property type="entry name" value="L-serine dehydratase, putative"/>
    <property type="match status" value="1"/>
</dbReference>
<dbReference type="Gene3D" id="3.40.50.1100">
    <property type="match status" value="2"/>
</dbReference>
<dbReference type="InterPro" id="IPR050147">
    <property type="entry name" value="Ser/Thr_Dehydratase"/>
</dbReference>
<dbReference type="InterPro" id="IPR000634">
    <property type="entry name" value="Ser/Thr_deHydtase_PyrdxlP-BS"/>
</dbReference>
<dbReference type="InterPro" id="IPR001926">
    <property type="entry name" value="TrpB-like_PALP"/>
</dbReference>
<dbReference type="InterPro" id="IPR036052">
    <property type="entry name" value="TrpB-like_PALP_sf"/>
</dbReference>
<dbReference type="PANTHER" id="PTHR48078:SF2">
    <property type="entry name" value="CATABOLIC L-SERINE_THREONINE DEHYDRATASE"/>
    <property type="match status" value="1"/>
</dbReference>
<dbReference type="PANTHER" id="PTHR48078">
    <property type="entry name" value="THREONINE DEHYDRATASE, MITOCHONDRIAL-RELATED"/>
    <property type="match status" value="1"/>
</dbReference>
<dbReference type="Pfam" id="PF00291">
    <property type="entry name" value="PALP"/>
    <property type="match status" value="1"/>
</dbReference>
<dbReference type="SUPFAM" id="SSF53686">
    <property type="entry name" value="Tryptophan synthase beta subunit-like PLP-dependent enzymes"/>
    <property type="match status" value="1"/>
</dbReference>
<dbReference type="PROSITE" id="PS00165">
    <property type="entry name" value="DEHYDRATASE_SER_THR"/>
    <property type="match status" value="1"/>
</dbReference>
<gene>
    <name type="primary">SDL1</name>
    <name type="synonym">SDH1</name>
    <name type="ORF">AWRI1631_90030</name>
</gene>
<comment type="catalytic activity">
    <reaction>
        <text>L-serine = pyruvate + NH4(+)</text>
        <dbReference type="Rhea" id="RHEA:19169"/>
        <dbReference type="ChEBI" id="CHEBI:15361"/>
        <dbReference type="ChEBI" id="CHEBI:28938"/>
        <dbReference type="ChEBI" id="CHEBI:33384"/>
        <dbReference type="EC" id="4.3.1.17"/>
    </reaction>
</comment>
<comment type="cofactor">
    <cofactor evidence="1">
        <name>pyridoxal 5'-phosphate</name>
        <dbReference type="ChEBI" id="CHEBI:597326"/>
    </cofactor>
</comment>
<comment type="pathway">
    <text>Carbohydrate biosynthesis; gluconeogenesis.</text>
</comment>
<comment type="subcellular location">
    <subcellularLocation>
        <location evidence="1">Cytoplasm</location>
    </subcellularLocation>
</comment>
<comment type="similarity">
    <text evidence="2">Belongs to the serine/threonine dehydratase family.</text>
</comment>
<accession>B5VKE8</accession>